<accession>Q86D25</accession>
<sequence>MFHNTFQSGLLSVLYSIGSKPLQIWDTQIKNGHVKRITDEEIQSLVLEIMGNNISTAFISCPVDPDKTLGIKLPFFVMVVKNMNKYFSFEVQIIDDKKIKRRFRASNYQSATRVKPFICTMPMRMDEGWNQIQFNLSDFVKRAYGTNYVETLRIQIHANCRIRRVYFADRLYTEDELPAEFKLYLPIRGQLSTQSPAFAMTSE</sequence>
<proteinExistence type="inferred from homology"/>
<reference key="1">
    <citation type="journal article" date="1998" name="Science">
        <title>Genome sequence of the nematode C. elegans: a platform for investigating biology.</title>
        <authorList>
            <consortium name="The C. elegans sequencing consortium"/>
        </authorList>
    </citation>
    <scope>NUCLEOTIDE SEQUENCE [LARGE SCALE GENOMIC DNA]</scope>
    <source>
        <strain>Bristol N2</strain>
    </source>
</reference>
<feature type="chain" id="PRO_0000296406" description="Cilia- and flagella-associated protein 20">
    <location>
        <begin position="1"/>
        <end position="203"/>
    </location>
</feature>
<dbReference type="EMBL" id="Z77131">
    <property type="protein sequence ID" value="CAD66219.1"/>
    <property type="molecule type" value="Genomic_DNA"/>
</dbReference>
<dbReference type="SMR" id="Q86D25"/>
<dbReference type="BioGRID" id="57455">
    <property type="interactions" value="1"/>
</dbReference>
<dbReference type="FunCoup" id="Q86D25">
    <property type="interactions" value="1842"/>
</dbReference>
<dbReference type="STRING" id="6239.C54C6.6.1"/>
<dbReference type="PaxDb" id="6239-C54C6.6"/>
<dbReference type="PeptideAtlas" id="Q86D25"/>
<dbReference type="EnsemblMetazoa" id="C54C6.6.1">
    <property type="protein sequence ID" value="C54C6.6.1"/>
    <property type="gene ID" value="WBGene00008288"/>
</dbReference>
<dbReference type="KEGG" id="cel:CELE_C54C6.6"/>
<dbReference type="UCSC" id="C54C6.6">
    <property type="organism name" value="c. elegans"/>
</dbReference>
<dbReference type="AGR" id="WB:WBGene00008288"/>
<dbReference type="CTD" id="353416"/>
<dbReference type="WormBase" id="C54C6.6">
    <property type="protein sequence ID" value="CE33367"/>
    <property type="gene ID" value="WBGene00008288"/>
    <property type="gene designation" value="cfap-20"/>
</dbReference>
<dbReference type="eggNOG" id="KOG3213">
    <property type="taxonomic scope" value="Eukaryota"/>
</dbReference>
<dbReference type="GeneTree" id="ENSGT00390000004554"/>
<dbReference type="HOGENOM" id="CLU_060610_1_1_1"/>
<dbReference type="InParanoid" id="Q86D25"/>
<dbReference type="OMA" id="MERYFTF"/>
<dbReference type="OrthoDB" id="7486196at2759"/>
<dbReference type="PhylomeDB" id="Q86D25"/>
<dbReference type="PRO" id="PR:Q86D25"/>
<dbReference type="Proteomes" id="UP000001940">
    <property type="component" value="Chromosome III"/>
</dbReference>
<dbReference type="GO" id="GO:0005879">
    <property type="term" value="C:axonemal microtubule"/>
    <property type="evidence" value="ECO:0000250"/>
    <property type="project" value="UniProtKB"/>
</dbReference>
<dbReference type="GO" id="GO:0005814">
    <property type="term" value="C:centriole"/>
    <property type="evidence" value="ECO:0000250"/>
    <property type="project" value="UniProtKB"/>
</dbReference>
<dbReference type="GO" id="GO:0036064">
    <property type="term" value="C:ciliary basal body"/>
    <property type="evidence" value="ECO:0000250"/>
    <property type="project" value="UniProtKB"/>
</dbReference>
<dbReference type="GO" id="GO:0005929">
    <property type="term" value="C:cilium"/>
    <property type="evidence" value="ECO:0000250"/>
    <property type="project" value="UniProtKB"/>
</dbReference>
<dbReference type="GO" id="GO:0031514">
    <property type="term" value="C:motile cilium"/>
    <property type="evidence" value="ECO:0000318"/>
    <property type="project" value="GO_Central"/>
</dbReference>
<dbReference type="GO" id="GO:0005634">
    <property type="term" value="C:nucleus"/>
    <property type="evidence" value="ECO:0007669"/>
    <property type="project" value="UniProtKB-SubCell"/>
</dbReference>
<dbReference type="GO" id="GO:0060271">
    <property type="term" value="P:cilium assembly"/>
    <property type="evidence" value="ECO:0000318"/>
    <property type="project" value="GO_Central"/>
</dbReference>
<dbReference type="GO" id="GO:2000147">
    <property type="term" value="P:positive regulation of cell motility"/>
    <property type="evidence" value="ECO:0000250"/>
    <property type="project" value="UniProtKB"/>
</dbReference>
<dbReference type="GO" id="GO:2000253">
    <property type="term" value="P:positive regulation of feeding behavior"/>
    <property type="evidence" value="ECO:0000250"/>
    <property type="project" value="UniProtKB"/>
</dbReference>
<dbReference type="GO" id="GO:0060296">
    <property type="term" value="P:regulation of cilium beat frequency involved in ciliary motility"/>
    <property type="evidence" value="ECO:0000250"/>
    <property type="project" value="UniProtKB"/>
</dbReference>
<dbReference type="InterPro" id="IPR040441">
    <property type="entry name" value="CFA20/CFAP20DC"/>
</dbReference>
<dbReference type="InterPro" id="IPR007714">
    <property type="entry name" value="CFA20_dom"/>
</dbReference>
<dbReference type="PANTHER" id="PTHR12458">
    <property type="entry name" value="ORF PROTEIN"/>
    <property type="match status" value="1"/>
</dbReference>
<dbReference type="Pfam" id="PF05018">
    <property type="entry name" value="CFA20_dom"/>
    <property type="match status" value="1"/>
</dbReference>
<protein>
    <recommendedName>
        <fullName>Cilia- and flagella-associated protein 20</fullName>
    </recommendedName>
</protein>
<keyword id="KW-0966">Cell projection</keyword>
<keyword id="KW-0969">Cilium</keyword>
<keyword id="KW-0963">Cytoplasm</keyword>
<keyword id="KW-0206">Cytoskeleton</keyword>
<keyword id="KW-0493">Microtubule</keyword>
<keyword id="KW-0539">Nucleus</keyword>
<keyword id="KW-1185">Reference proteome</keyword>
<gene>
    <name evidence="4" type="primary">cfap-20</name>
    <name evidence="4" type="ORF">C54C6.6</name>
</gene>
<comment type="function">
    <text evidence="2">Cilium- and flagellum-specific protein that plays a role in axonemal structure organization and motility. Microtubule inner protein (MIP) part of the dynein-decorated doublet microtubules (DMTs) in cilia axoneme, which is required for motile cilia beating. Involved in the regulation of the size and morphology of cilia. Required for axonemal microtubules polyglutamylation.</text>
</comment>
<comment type="subcellular location">
    <subcellularLocation>
        <location evidence="2">Nucleus</location>
    </subcellularLocation>
    <subcellularLocation>
        <location evidence="2">Cytoplasm</location>
        <location evidence="2">Cytoskeleton</location>
        <location evidence="2">Microtubule organizing center</location>
        <location evidence="2">Centrosome</location>
        <location evidence="2">Centriole</location>
    </subcellularLocation>
    <subcellularLocation>
        <location evidence="2">Cytoplasm</location>
        <location evidence="2">Cytoskeleton</location>
        <location evidence="2">Cilium basal body</location>
    </subcellularLocation>
    <subcellularLocation>
        <location evidence="1">Cytoplasm</location>
        <location evidence="1">Cytoskeleton</location>
        <location evidence="1">Cilium axoneme</location>
    </subcellularLocation>
</comment>
<comment type="similarity">
    <text evidence="3">Belongs to the CFAP20 family.</text>
</comment>
<organism>
    <name type="scientific">Caenorhabditis elegans</name>
    <dbReference type="NCBI Taxonomy" id="6239"/>
    <lineage>
        <taxon>Eukaryota</taxon>
        <taxon>Metazoa</taxon>
        <taxon>Ecdysozoa</taxon>
        <taxon>Nematoda</taxon>
        <taxon>Chromadorea</taxon>
        <taxon>Rhabditida</taxon>
        <taxon>Rhabditina</taxon>
        <taxon>Rhabditomorpha</taxon>
        <taxon>Rhabditoidea</taxon>
        <taxon>Rhabditidae</taxon>
        <taxon>Peloderinae</taxon>
        <taxon>Caenorhabditis</taxon>
    </lineage>
</organism>
<name>CFA20_CAEEL</name>
<evidence type="ECO:0000250" key="1">
    <source>
        <dbReference type="UniProtKB" id="Q6B857"/>
    </source>
</evidence>
<evidence type="ECO:0000250" key="2">
    <source>
        <dbReference type="UniProtKB" id="Q9Y6A4"/>
    </source>
</evidence>
<evidence type="ECO:0000305" key="3"/>
<evidence type="ECO:0000312" key="4">
    <source>
        <dbReference type="WormBase" id="C54C6.6"/>
    </source>
</evidence>